<organism>
    <name type="scientific">Bos taurus</name>
    <name type="common">Bovine</name>
    <dbReference type="NCBI Taxonomy" id="9913"/>
    <lineage>
        <taxon>Eukaryota</taxon>
        <taxon>Metazoa</taxon>
        <taxon>Chordata</taxon>
        <taxon>Craniata</taxon>
        <taxon>Vertebrata</taxon>
        <taxon>Euteleostomi</taxon>
        <taxon>Mammalia</taxon>
        <taxon>Eutheria</taxon>
        <taxon>Laurasiatheria</taxon>
        <taxon>Artiodactyla</taxon>
        <taxon>Ruminantia</taxon>
        <taxon>Pecora</taxon>
        <taxon>Bovidae</taxon>
        <taxon>Bovinae</taxon>
        <taxon>Bos</taxon>
    </lineage>
</organism>
<evidence type="ECO:0000250" key="1">
    <source>
        <dbReference type="UniProtKB" id="E9PYQ0"/>
    </source>
</evidence>
<evidence type="ECO:0000250" key="2">
    <source>
        <dbReference type="UniProtKB" id="P0C881"/>
    </source>
</evidence>
<evidence type="ECO:0000255" key="3"/>
<evidence type="ECO:0000256" key="4">
    <source>
        <dbReference type="SAM" id="MobiDB-lite"/>
    </source>
</evidence>
<feature type="chain" id="PRO_0000311942" description="Radial spoke head 10 homolog B">
    <location>
        <begin position="1"/>
        <end position="840"/>
    </location>
</feature>
<feature type="repeat" description="MORN 1">
    <location>
        <begin position="86"/>
        <end position="108"/>
    </location>
</feature>
<feature type="repeat" description="MORN 2">
    <location>
        <begin position="109"/>
        <end position="131"/>
    </location>
</feature>
<feature type="repeat" description="MORN 3">
    <location>
        <begin position="132"/>
        <end position="154"/>
    </location>
</feature>
<feature type="repeat" description="MORN 4">
    <location>
        <begin position="155"/>
        <end position="177"/>
    </location>
</feature>
<feature type="repeat" description="MORN 5">
    <location>
        <begin position="179"/>
        <end position="201"/>
    </location>
</feature>
<feature type="repeat" description="MORN 6">
    <location>
        <begin position="204"/>
        <end position="226"/>
    </location>
</feature>
<feature type="repeat" description="MORN 7">
    <location>
        <begin position="227"/>
        <end position="249"/>
    </location>
</feature>
<feature type="repeat" description="MORN 8">
    <location>
        <begin position="251"/>
        <end position="273"/>
    </location>
</feature>
<feature type="repeat" description="MORN 9">
    <location>
        <begin position="284"/>
        <end position="306"/>
    </location>
</feature>
<feature type="repeat" description="MORN 10">
    <location>
        <begin position="307"/>
        <end position="329"/>
    </location>
</feature>
<feature type="region of interest" description="Disordered" evidence="4">
    <location>
        <begin position="1"/>
        <end position="74"/>
    </location>
</feature>
<feature type="region of interest" description="Disordered" evidence="4">
    <location>
        <begin position="810"/>
        <end position="840"/>
    </location>
</feature>
<feature type="coiled-coil region" evidence="3">
    <location>
        <begin position="758"/>
        <end position="801"/>
    </location>
</feature>
<feature type="compositionally biased region" description="Basic and acidic residues" evidence="4">
    <location>
        <begin position="1"/>
        <end position="16"/>
    </location>
</feature>
<feature type="compositionally biased region" description="Basic and acidic residues" evidence="4">
    <location>
        <begin position="51"/>
        <end position="63"/>
    </location>
</feature>
<reference key="1">
    <citation type="journal article" date="2005" name="BMC Genomics">
        <title>Characterization of 954 bovine full-CDS cDNA sequences.</title>
        <authorList>
            <person name="Harhay G.P."/>
            <person name="Sonstegard T.S."/>
            <person name="Keele J.W."/>
            <person name="Heaton M.P."/>
            <person name="Clawson M.L."/>
            <person name="Snelling W.M."/>
            <person name="Wiedmann R.T."/>
            <person name="Van Tassell C.P."/>
            <person name="Smith T.P.L."/>
        </authorList>
    </citation>
    <scope>NUCLEOTIDE SEQUENCE [LARGE SCALE MRNA] OF 1-835</scope>
</reference>
<reference key="2">
    <citation type="submission" date="2006-01" db="EMBL/GenBank/DDBJ databases">
        <title>AgResearch, genesis and primary industry Victoria bovine EST project.</title>
        <authorList>
            <person name="McCulloch A."/>
            <person name="Wilson T."/>
            <person name="Molenaar A."/>
            <person name="Grigor M."/>
            <person name="Davis S."/>
            <person name="Glenn M."/>
            <person name="Havukkala I."/>
            <person name="Watson J."/>
            <person name="Crawford A."/>
            <person name="Wheeler T."/>
            <person name="Hagemann L."/>
            <person name="Lee R."/>
            <person name="Hein W."/>
            <person name="Johnstone P."/>
            <person name="Maqbool N."/>
            <person name="McMahon C."/>
            <person name="McCracken J."/>
            <person name="Stelwagen K."/>
            <person name="Farr V."/>
            <person name="Singh K."/>
            <person name="Whitley J."/>
            <person name="Nicholas K."/>
            <person name="Savin K."/>
            <person name="Mather A."/>
            <person name="McPartlan H."/>
            <person name="Whitley J."/>
            <person name="Wells M."/>
            <person name="Bowman P."/>
            <person name="Goddard M."/>
            <person name="Langford C."/>
            <person name="McEwan J."/>
            <person name="Atkinson P."/>
        </authorList>
    </citation>
    <scope>NUCLEOTIDE SEQUENCE [LARGE SCALE MRNA] OF 757-840</scope>
</reference>
<keyword id="KW-0966">Cell projection</keyword>
<keyword id="KW-0969">Cilium</keyword>
<keyword id="KW-0175">Coiled coil</keyword>
<keyword id="KW-0963">Cytoplasm</keyword>
<keyword id="KW-0206">Cytoskeleton</keyword>
<keyword id="KW-0282">Flagellum</keyword>
<keyword id="KW-1185">Reference proteome</keyword>
<keyword id="KW-0677">Repeat</keyword>
<accession>Q1JPG1</accession>
<comment type="function">
    <text evidence="1">May function as part of the axonemal radial spoke complex 3 (RS3). Radial spoke complexes are important for ciliary motility.</text>
</comment>
<comment type="subunit">
    <text evidence="1">Interacts with RSPH6A. Does not appear to be part of the axonemal radial spoke complexes 1 or 2.</text>
</comment>
<comment type="subcellular location">
    <subcellularLocation>
        <location evidence="1">Cytoplasm</location>
        <location evidence="1">Cytoskeleton</location>
        <location evidence="1">Cilium axoneme</location>
    </subcellularLocation>
    <subcellularLocation>
        <location evidence="2">Cell projection</location>
        <location evidence="2">Cilium</location>
    </subcellularLocation>
    <subcellularLocation>
        <location evidence="2">Cell projection</location>
        <location evidence="2">Cilium</location>
        <location evidence="2">Flagellum</location>
    </subcellularLocation>
</comment>
<proteinExistence type="evidence at transcript level"/>
<sequence length="840" mass="95887">MVKEKKKADKKGDKSARSPSSPSDYPEFAKQDGNAPRQDASPSAAPALDVQPKDPGVKREVKSESLPNEDTTQYEEPVLTKLIVESYEGEKVRGLYEGEGFAIFQGGCTYQGMFSEGLMHGQGTYIWADGLKYEGDFVKNIPMNHGIFTWPDGSTYEGEVVGGMRHGFGMFKCSTQPVSYIGHWCHGKRHGKGSIYYNQEGTSWYEGDWIHNIRKGWGIRCYKSGNIYEGQWENNVRHGEGRMRWLTTNEEYTGQWKHGVQNGLGTHTWFLKRIPYSQYPLRNEYVGEFVNGYRHGHGKFYYASGAMYEGEWVSNKKHGMGRLTFKNGRVYDGPFSKDHMVAFPNLEGEVMSYPDSTSECAFGCQWCRPSASAEIMRKLDGNESNSLLGSSLELDLSLLLKMYPERDQSEEKKQVEYAILRNITELRRIYNFYSSLGCDRSLDNTFLMTKLHFWRFLKDCKFHHHNITLADMDRVLGANNDIPVEEIHSPFTTLLLRTFLNYLLQLAYHIHHKEYQDRSPSLFLCFKKLMNENIRPNACRVKGRLFCEAQRTLYSMTYVDKCWEIYTAHCRPNAAPPHELTMSTRHFLWMLRSFKIINKELTATKFVEVIAEDNPSMYDGIDSNFELELVFLEFFEALLSFALICVPEPPTKFCSDFPNDDLSVNKAGSTYPVTAQNTQNRSPSAVASQESDIQFSSTKSSSSKLGVLVDISKIRKSEPKIKKSVSDGTTSKVNFKSAGKGLTFLLSQSAHKHEETLKEKVKENRLHNEAMALQRKMENEELEARLNSLREEEAKRQDYEVDITVIKEPVDAPSSSFTPSPPKEDTVVSSKSITSKKKKK</sequence>
<dbReference type="EMBL" id="BT025392">
    <property type="protein sequence ID" value="ABF57348.1"/>
    <property type="molecule type" value="mRNA"/>
</dbReference>
<dbReference type="SMR" id="Q1JPG1"/>
<dbReference type="FunCoup" id="Q1JPG1">
    <property type="interactions" value="505"/>
</dbReference>
<dbReference type="STRING" id="9913.ENSBTAP00000007760"/>
<dbReference type="PaxDb" id="9913-ENSBTAP00000007760"/>
<dbReference type="eggNOG" id="KOG0231">
    <property type="taxonomic scope" value="Eukaryota"/>
</dbReference>
<dbReference type="InParanoid" id="Q1JPG1"/>
<dbReference type="OrthoDB" id="294378at2759"/>
<dbReference type="Proteomes" id="UP000009136">
    <property type="component" value="Unplaced"/>
</dbReference>
<dbReference type="GO" id="GO:0097729">
    <property type="term" value="C:9+2 motile cilium"/>
    <property type="evidence" value="ECO:0000250"/>
    <property type="project" value="UniProtKB"/>
</dbReference>
<dbReference type="GO" id="GO:0005929">
    <property type="term" value="C:cilium"/>
    <property type="evidence" value="ECO:0000250"/>
    <property type="project" value="UniProtKB"/>
</dbReference>
<dbReference type="GO" id="GO:0005737">
    <property type="term" value="C:cytoplasm"/>
    <property type="evidence" value="ECO:0007669"/>
    <property type="project" value="UniProtKB-KW"/>
</dbReference>
<dbReference type="GO" id="GO:0005856">
    <property type="term" value="C:cytoskeleton"/>
    <property type="evidence" value="ECO:0007669"/>
    <property type="project" value="UniProtKB-KW"/>
</dbReference>
<dbReference type="GO" id="GO:0036126">
    <property type="term" value="C:sperm flagellum"/>
    <property type="evidence" value="ECO:0000250"/>
    <property type="project" value="UniProtKB"/>
</dbReference>
<dbReference type="Gene3D" id="2.20.110.10">
    <property type="entry name" value="Histone H3 K4-specific methyltransferase SET7/9 N-terminal domain"/>
    <property type="match status" value="3"/>
</dbReference>
<dbReference type="InterPro" id="IPR003409">
    <property type="entry name" value="MORN"/>
</dbReference>
<dbReference type="PANTHER" id="PTHR46613">
    <property type="entry name" value="RADIAL SPOKE HEAD 10 HOMOLOG B-RELATED"/>
    <property type="match status" value="1"/>
</dbReference>
<dbReference type="PANTHER" id="PTHR46613:SF1">
    <property type="entry name" value="RADIAL SPOKE HEAD 10 HOMOLOG B-RELATED"/>
    <property type="match status" value="1"/>
</dbReference>
<dbReference type="Pfam" id="PF02493">
    <property type="entry name" value="MORN"/>
    <property type="match status" value="10"/>
</dbReference>
<dbReference type="SMART" id="SM00698">
    <property type="entry name" value="MORN"/>
    <property type="match status" value="9"/>
</dbReference>
<dbReference type="SUPFAM" id="SSF82185">
    <property type="entry name" value="Histone H3 K4-specific methyltransferase SET7/9 N-terminal domain"/>
    <property type="match status" value="2"/>
</dbReference>
<gene>
    <name type="primary">RSPH10B</name>
</gene>
<name>RS10B_BOVIN</name>
<protein>
    <recommendedName>
        <fullName>Radial spoke head 10 homolog B</fullName>
    </recommendedName>
</protein>